<keyword id="KW-0238">DNA-binding</keyword>
<keyword id="KW-0240">DNA-directed RNA polymerase</keyword>
<keyword id="KW-0460">Magnesium</keyword>
<keyword id="KW-0479">Metal-binding</keyword>
<keyword id="KW-0548">Nucleotidyltransferase</keyword>
<keyword id="KW-0539">Nucleus</keyword>
<keyword id="KW-0804">Transcription</keyword>
<keyword id="KW-0808">Transferase</keyword>
<keyword id="KW-0862">Zinc</keyword>
<dbReference type="EC" id="2.7.7.6"/>
<dbReference type="EMBL" id="X13492">
    <property type="protein sequence ID" value="CAA31847.1"/>
    <property type="molecule type" value="Genomic_DNA"/>
</dbReference>
<dbReference type="PIR" id="B31875">
    <property type="entry name" value="B31875"/>
</dbReference>
<dbReference type="SMR" id="P17545"/>
<dbReference type="GO" id="GO:0005739">
    <property type="term" value="C:mitochondrion"/>
    <property type="evidence" value="ECO:0007669"/>
    <property type="project" value="GOC"/>
</dbReference>
<dbReference type="GO" id="GO:0009536">
    <property type="term" value="C:plastid"/>
    <property type="evidence" value="ECO:0007669"/>
    <property type="project" value="GOC"/>
</dbReference>
<dbReference type="GO" id="GO:0005665">
    <property type="term" value="C:RNA polymerase II, core complex"/>
    <property type="evidence" value="ECO:0007669"/>
    <property type="project" value="TreeGrafter"/>
</dbReference>
<dbReference type="GO" id="GO:0003677">
    <property type="term" value="F:DNA binding"/>
    <property type="evidence" value="ECO:0007669"/>
    <property type="project" value="UniProtKB-KW"/>
</dbReference>
<dbReference type="GO" id="GO:0003899">
    <property type="term" value="F:DNA-directed RNA polymerase activity"/>
    <property type="evidence" value="ECO:0007669"/>
    <property type="project" value="UniProtKB-EC"/>
</dbReference>
<dbReference type="GO" id="GO:0046872">
    <property type="term" value="F:metal ion binding"/>
    <property type="evidence" value="ECO:0007669"/>
    <property type="project" value="UniProtKB-KW"/>
</dbReference>
<dbReference type="GO" id="GO:0006351">
    <property type="term" value="P:DNA-templated transcription"/>
    <property type="evidence" value="ECO:0007669"/>
    <property type="project" value="InterPro"/>
</dbReference>
<dbReference type="CDD" id="cd02733">
    <property type="entry name" value="RNAP_II_RPB1_N"/>
    <property type="match status" value="1"/>
</dbReference>
<dbReference type="FunFam" id="2.40.40.20:FF:000019">
    <property type="entry name" value="DNA-directed RNA polymerase II subunit RPB1"/>
    <property type="match status" value="1"/>
</dbReference>
<dbReference type="FunFam" id="1.10.150.390:FF:000001">
    <property type="entry name" value="DNA-directed RNA polymerase subunit"/>
    <property type="match status" value="1"/>
</dbReference>
<dbReference type="FunFam" id="1.10.274.100:FF:000013">
    <property type="entry name" value="DNA-directed RNA polymerase subunit"/>
    <property type="match status" value="1"/>
</dbReference>
<dbReference type="FunFam" id="3.30.1490.180:FF:000006">
    <property type="entry name" value="DNA-directed RNA polymerase subunit"/>
    <property type="match status" value="1"/>
</dbReference>
<dbReference type="Gene3D" id="1.10.132.30">
    <property type="match status" value="1"/>
</dbReference>
<dbReference type="Gene3D" id="1.10.150.390">
    <property type="match status" value="1"/>
</dbReference>
<dbReference type="Gene3D" id="2.40.40.20">
    <property type="match status" value="1"/>
</dbReference>
<dbReference type="Gene3D" id="3.30.1360.140">
    <property type="match status" value="1"/>
</dbReference>
<dbReference type="Gene3D" id="6.10.250.2940">
    <property type="match status" value="1"/>
</dbReference>
<dbReference type="Gene3D" id="6.20.50.80">
    <property type="match status" value="1"/>
</dbReference>
<dbReference type="Gene3D" id="3.30.1490.180">
    <property type="entry name" value="RNA polymerase ii"/>
    <property type="match status" value="1"/>
</dbReference>
<dbReference type="Gene3D" id="4.10.860.120">
    <property type="entry name" value="RNA polymerase II, clamp domain"/>
    <property type="match status" value="1"/>
</dbReference>
<dbReference type="Gene3D" id="1.10.274.100">
    <property type="entry name" value="RNA polymerase Rpb1, domain 3"/>
    <property type="match status" value="1"/>
</dbReference>
<dbReference type="InterPro" id="IPR045867">
    <property type="entry name" value="DNA-dir_RpoC_beta_prime"/>
</dbReference>
<dbReference type="InterPro" id="IPR000722">
    <property type="entry name" value="RNA_pol_asu"/>
</dbReference>
<dbReference type="InterPro" id="IPR006592">
    <property type="entry name" value="RNA_pol_N"/>
</dbReference>
<dbReference type="InterPro" id="IPR007080">
    <property type="entry name" value="RNA_pol_Rpb1_1"/>
</dbReference>
<dbReference type="InterPro" id="IPR007066">
    <property type="entry name" value="RNA_pol_Rpb1_3"/>
</dbReference>
<dbReference type="InterPro" id="IPR042102">
    <property type="entry name" value="RNA_pol_Rpb1_3_sf"/>
</dbReference>
<dbReference type="InterPro" id="IPR007083">
    <property type="entry name" value="RNA_pol_Rpb1_4"/>
</dbReference>
<dbReference type="InterPro" id="IPR007081">
    <property type="entry name" value="RNA_pol_Rpb1_5"/>
</dbReference>
<dbReference type="InterPro" id="IPR007075">
    <property type="entry name" value="RNA_pol_Rpb1_6"/>
</dbReference>
<dbReference type="InterPro" id="IPR007073">
    <property type="entry name" value="RNA_pol_Rpb1_7"/>
</dbReference>
<dbReference type="InterPro" id="IPR038593">
    <property type="entry name" value="RNA_pol_Rpb1_7_sf"/>
</dbReference>
<dbReference type="InterPro" id="IPR044893">
    <property type="entry name" value="RNA_pol_Rpb1_clamp_domain"/>
</dbReference>
<dbReference type="InterPro" id="IPR038120">
    <property type="entry name" value="Rpb1_funnel_sf"/>
</dbReference>
<dbReference type="PANTHER" id="PTHR19376">
    <property type="entry name" value="DNA-DIRECTED RNA POLYMERASE"/>
    <property type="match status" value="1"/>
</dbReference>
<dbReference type="PANTHER" id="PTHR19376:SF37">
    <property type="entry name" value="DNA-DIRECTED RNA POLYMERASE II SUBUNIT RPB1"/>
    <property type="match status" value="1"/>
</dbReference>
<dbReference type="Pfam" id="PF04997">
    <property type="entry name" value="RNA_pol_Rpb1_1"/>
    <property type="match status" value="1"/>
</dbReference>
<dbReference type="Pfam" id="PF00623">
    <property type="entry name" value="RNA_pol_Rpb1_2"/>
    <property type="match status" value="1"/>
</dbReference>
<dbReference type="Pfam" id="PF04983">
    <property type="entry name" value="RNA_pol_Rpb1_3"/>
    <property type="match status" value="1"/>
</dbReference>
<dbReference type="Pfam" id="PF05000">
    <property type="entry name" value="RNA_pol_Rpb1_4"/>
    <property type="match status" value="1"/>
</dbReference>
<dbReference type="Pfam" id="PF04998">
    <property type="entry name" value="RNA_pol_Rpb1_5"/>
    <property type="match status" value="1"/>
</dbReference>
<dbReference type="Pfam" id="PF04992">
    <property type="entry name" value="RNA_pol_Rpb1_6"/>
    <property type="match status" value="1"/>
</dbReference>
<dbReference type="Pfam" id="PF04990">
    <property type="entry name" value="RNA_pol_Rpb1_7"/>
    <property type="match status" value="1"/>
</dbReference>
<dbReference type="SMART" id="SM00663">
    <property type="entry name" value="RPOLA_N"/>
    <property type="match status" value="1"/>
</dbReference>
<dbReference type="SUPFAM" id="SSF64484">
    <property type="entry name" value="beta and beta-prime subunits of DNA dependent RNA-polymerase"/>
    <property type="match status" value="1"/>
</dbReference>
<organism>
    <name type="scientific">Trypanosoma brucei brucei</name>
    <dbReference type="NCBI Taxonomy" id="5702"/>
    <lineage>
        <taxon>Eukaryota</taxon>
        <taxon>Discoba</taxon>
        <taxon>Euglenozoa</taxon>
        <taxon>Kinetoplastea</taxon>
        <taxon>Metakinetoplastina</taxon>
        <taxon>Trypanosomatida</taxon>
        <taxon>Trypanosomatidae</taxon>
        <taxon>Trypanosoma</taxon>
    </lineage>
</organism>
<protein>
    <recommendedName>
        <fullName>DNA-directed RNA polymerase II subunit RPB1-B</fullName>
        <shortName>RNA polymerase II subunit B1-B</shortName>
        <ecNumber>2.7.7.6</ecNumber>
    </recommendedName>
    <alternativeName>
        <fullName>DNA-directed RNA polymerase II largest subunit B</fullName>
    </alternativeName>
</protein>
<comment type="function">
    <text evidence="1 3">DNA-dependent RNA polymerase catalyzes the transcription of DNA into RNA using the four ribonucleoside triphosphates as substrates. Largest and catalytic component of RNA polymerase II which synthesizes mRNA precursors and many functional non-coding RNAs. Forms the polymerase active center together with the second largest subunit. Pol II is the central component of the basal RNA polymerase II transcription machinery. It is composed of mobile elements that move relative to each other. RPB1 is part of the core element with the central large cleft, the clamp element that moves to open and close the cleft and the jaws that are thought to grab the incoming DNA template. At the start of transcription, a single-stranded DNA template strand of the promoter is positioned within the central active site cleft of Pol II. A bridging helix emanates from RPB1 and crosses the cleft near the catalytic site and is thought to promote translocation of Pol II by acting as a ratchet that moves the RNA-DNA hybrid through the active site by switching from straight to bent conformations at each step of nucleotide addition. During transcription elongation, Pol II moves on the template as the transcript elongates (By similarity).</text>
</comment>
<comment type="catalytic activity">
    <reaction>
        <text>RNA(n) + a ribonucleoside 5'-triphosphate = RNA(n+1) + diphosphate</text>
        <dbReference type="Rhea" id="RHEA:21248"/>
        <dbReference type="Rhea" id="RHEA-COMP:14527"/>
        <dbReference type="Rhea" id="RHEA-COMP:17342"/>
        <dbReference type="ChEBI" id="CHEBI:33019"/>
        <dbReference type="ChEBI" id="CHEBI:61557"/>
        <dbReference type="ChEBI" id="CHEBI:140395"/>
        <dbReference type="EC" id="2.7.7.6"/>
    </reaction>
</comment>
<comment type="subunit">
    <text evidence="1">Component of the RNA polymerase II (Pol II) complex consisting of 12 subunits.</text>
</comment>
<comment type="subcellular location">
    <subcellularLocation>
        <location>Nucleus</location>
    </subcellularLocation>
</comment>
<comment type="miscellaneous">
    <text>The binding of ribonucleoside triphosphate to the RNA polymerase II transcribing complex probably involves a two-step mechanism. The initial binding seems to occur at the entry (E) site and involves a magnesium ion temporarily coordinated by three conserved aspartate residues of the two largest RNA Pol II subunits. The ribonucleoside triphosphate is transferred by a rotation to the nucleotide addition (A) site for pairing with the template DNA. The catalytic A site involves three conserved aspartate residues of the RNA Pol II largest subunit which permanently coordinate a second magnesium ion.</text>
</comment>
<comment type="miscellaneous">
    <text>Trypanosoma brucei contains two genes for the Pol II largest subunit. The presence of both, polIIA and polIIB genes, is not essential for viability and neither of the genes seem not to confer to alpha-amanitin-resistant transcription.</text>
</comment>
<comment type="similarity">
    <text evidence="4">Belongs to the RNA polymerase beta' chain family.</text>
</comment>
<comment type="caution">
    <text evidence="4">Protein purification and mass spectrometry by PubMed:16962183 do not differentiate between the TRP4.8/polIIA and TRP5.9/polIIB gene products.</text>
</comment>
<name>RPB1B_TRYBB</name>
<accession>P17545</accession>
<proteinExistence type="evidence at protein level"/>
<gene>
    <name type="primary">TRP5.9</name>
    <name type="synonym">polIIB</name>
</gene>
<feature type="chain" id="PRO_0000073931" description="DNA-directed RNA polymerase II subunit RPB1-B">
    <location>
        <begin position="1"/>
        <end position="1766"/>
    </location>
</feature>
<feature type="region of interest" description="Bridging helix">
    <location>
        <begin position="813"/>
        <end position="825"/>
    </location>
</feature>
<feature type="region of interest" description="Disordered" evidence="2">
    <location>
        <begin position="1660"/>
        <end position="1766"/>
    </location>
</feature>
<feature type="compositionally biased region" description="Basic and acidic residues" evidence="2">
    <location>
        <begin position="1706"/>
        <end position="1716"/>
    </location>
</feature>
<feature type="compositionally biased region" description="Low complexity" evidence="2">
    <location>
        <begin position="1742"/>
        <end position="1756"/>
    </location>
</feature>
<feature type="binding site" evidence="1">
    <location>
        <position position="69"/>
    </location>
    <ligand>
        <name>Zn(2+)</name>
        <dbReference type="ChEBI" id="CHEBI:29105"/>
    </ligand>
</feature>
<feature type="binding site" evidence="1">
    <location>
        <position position="72"/>
    </location>
    <ligand>
        <name>Zn(2+)</name>
        <dbReference type="ChEBI" id="CHEBI:29105"/>
    </ligand>
</feature>
<feature type="binding site" evidence="1">
    <location>
        <position position="79"/>
    </location>
    <ligand>
        <name>Zn(2+)</name>
        <dbReference type="ChEBI" id="CHEBI:29105"/>
    </ligand>
</feature>
<feature type="binding site" evidence="1">
    <location>
        <position position="82"/>
    </location>
    <ligand>
        <name>Zn(2+)</name>
        <dbReference type="ChEBI" id="CHEBI:29105"/>
    </ligand>
</feature>
<feature type="binding site" evidence="1">
    <location>
        <position position="487"/>
    </location>
    <ligand>
        <name>Mg(2+)</name>
        <dbReference type="ChEBI" id="CHEBI:18420"/>
        <label>1</label>
        <note>catalytic</note>
    </ligand>
</feature>
<feature type="binding site" evidence="1">
    <location>
        <position position="487"/>
    </location>
    <ligand>
        <name>Mg(2+)</name>
        <dbReference type="ChEBI" id="CHEBI:18420"/>
        <label>2</label>
        <note>ligand shared with RPB2</note>
    </ligand>
</feature>
<feature type="binding site" evidence="1">
    <location>
        <position position="489"/>
    </location>
    <ligand>
        <name>Mg(2+)</name>
        <dbReference type="ChEBI" id="CHEBI:18420"/>
        <label>1</label>
        <note>catalytic</note>
    </ligand>
</feature>
<feature type="binding site" evidence="1">
    <location>
        <position position="489"/>
    </location>
    <ligand>
        <name>Mg(2+)</name>
        <dbReference type="ChEBI" id="CHEBI:18420"/>
        <label>2</label>
        <note>ligand shared with RPB2</note>
    </ligand>
</feature>
<feature type="binding site" evidence="1">
    <location>
        <position position="491"/>
    </location>
    <ligand>
        <name>Mg(2+)</name>
        <dbReference type="ChEBI" id="CHEBI:18420"/>
        <label>1</label>
        <note>catalytic</note>
    </ligand>
</feature>
<reference key="1">
    <citation type="journal article" date="1989" name="Cell">
        <title>Trypanosoma brucei contains two RNA polymerase II largest subunit genes with an altered C-terminal domain.</title>
        <authorList>
            <person name="Evers R."/>
            <person name="Hammer A."/>
            <person name="Koeck J."/>
            <person name="Waldemar J."/>
            <person name="Borst P."/>
            <person name="Memet S."/>
            <person name="Cornelissen A.W.C.A."/>
        </authorList>
    </citation>
    <scope>NUCLEOTIDE SEQUENCE [GENOMIC DNA]</scope>
</reference>
<reference key="2">
    <citation type="journal article" date="1993" name="Mol. Cell. Biol.">
        <title>Disruption of largest subunit RNA polymerase II genes in Trypanosoma brucei.</title>
        <authorList>
            <person name="Chung H.M."/>
            <person name="Lee M.G."/>
            <person name="Dietrich P."/>
            <person name="Huang J."/>
            <person name="Van der Ploeg L.H.T."/>
        </authorList>
    </citation>
    <scope>FUNCTION</scope>
</reference>
<reference key="3">
    <citation type="journal article" date="2006" name="Mol. Biochem. Parasitol.">
        <title>Biochemical characterization of Trypanosoma brucei RNA polymerase II.</title>
        <authorList>
            <person name="Das A."/>
            <person name="Li H."/>
            <person name="Liu T."/>
            <person name="Bellofatto V."/>
        </authorList>
    </citation>
    <scope>IDENTIFICATION IN THE RNA POLYMERASE II COMPLEX</scope>
    <scope>IDENTIFICATION BY MASS SPECTROMETRY</scope>
</reference>
<evidence type="ECO:0000250" key="1"/>
<evidence type="ECO:0000256" key="2">
    <source>
        <dbReference type="SAM" id="MobiDB-lite"/>
    </source>
</evidence>
<evidence type="ECO:0000269" key="3">
    <source>
    </source>
</evidence>
<evidence type="ECO:0000305" key="4"/>
<sequence>MSGGAALPVSQMELHKVNEVQFEIFKERQIKSYAVCLVEHAKSYANAADQSGEASMICVWVPLTSNSACETCHRKHPECPGHFGYIELAEPVFNIGVFDLVLLVLKCVCKTCGALLLNTREQDVHKKLQHMTGLNRLRQVAKMAEAKCRVSTSTEDDMGIDGFDSAPFNGGSGMGPGATRGCGASQPRVSRFYGIYPTLVIKAVHEEQDAEWHADKVRQVLDRVSDDDARLMGFDPQRCHPRDLVLTVLPVPPPQVRPAISFGGLRSDDELTHQIMSIVKRNNQLRRDKESDVQAAIDRSRALLQEHVATYFNNASTYYKPTKVNDTKKLKSLTERLKGKYGRLRGNLMGKRVDFSARTVITGDPNIDVDEVGVPFSVAMTLTFPERVNTINKKRLTEFARRTVYPSANYIHHPNGTITKLALLRDRSKVTLNIGDVVERHVINGDVVLFNRQPTLHRMSMMGHRVRVLNYNTFRLNLSCTTPYNADFDGDEMNLHVPQSLLTKAELIEMMMVPKNFVSPNKSAPCMGIVQDSLLGSYRLTDKDTFLDKYFVQSVALWLDLWQLPIPAILKPRPLWTGKQVFSLILPEVNHPATPQDRPPFPHNDSVVMIRRGQLLCGPITKSIVGAAPGSLIHVIFNEHGSDEVARFINGVQRVTTFFLLNFGFSVGVQDTVADSDTLRQMNDVLVKTRRNVEKIGAAANNRTLNRKAGMTLLQSFEADVNSALNKCREEAAKKALSNVRRTNSFKVMIEAGSKGTDLNICQIAVFVGQQNVAGSRIPFGFRRRTLPHFMLDDYGETSRGMANRGYVEGLKPHEFFFHTMAGREGLIDTAVKTSDTGYLQRKLIKALEDVHAAYDGTVRNANDELIQFMYGEDGLDGARIEGGQLFPLPFRDDKEMEDTYKYEYDVDGTFSGKVGGNYMDPHVRKMLRADPQNVRKLQEEYEQLTADREWSRKMLDLEDRDKLKLNLPVNPGRLIQNARSTMGKRSQVSNLSPITIIDHVRKLQEDLMKLFPSYHRGGDGYIRNTLSRERIESALTLFNVHLRQLLASKRVLKEYKLNDRAFEYLLKEIRTKYHQSLTTPGENIGAIAAQSCGEPATQMTLNTFHNAGISSKNVTLGVPRLLELLNVSRNQKHASMTVSLFPPYDEKRNAQKAQHLIEYCTLESITRRIQFIYDPDPRHTVVEADRDILELEWNVMDESDAELRIQEVVAGSPWVVRLELDVDMVTDKALDMKDVKQAILRVDESYIIETGMANNVRQRTIRMRSRYNEGADSIPKLKREIPALLARVHLRGIPGVRRALLKDTTEFTVDQATGKMSGNKIWAIDTDGTALRRAFIGVVGEDGKNIINAVKTSSNKVPEVCSLLGIEAARSKMLTELREAYLAYGLNINYRHYTILVDTICQHGYLMAVSRSGINRSDTSGPLMRCSFEETVKVLMAAASFGECDPVRGVSANLVLGNQARVGTGLFDLVLNMAALQQAVPQAEAVAPGKDVNVYHSLGSTLQQNIQSSIAYRPRDHDATPFVNNASLFLRQGFGGGSSSAPVTASAPYNPSTTYHGGRLEASAVHRSQAYSTSPALEYGGREASASQMYSVMSSASAFNPVSTRMSSVAHSYSEYSEASSYHLQHSVAPTSMQASLPRTDNSMTMQGIGSVSVPYTPHAMSSAAPPSQVYASTEVGRSHSEDSRSQSALYVPTLSPTHAGYAIRGDEPSTHRSDSNVMWREAGGGREQDEEDDLSTNYMPTAKTPQQAAPPTAAEFGDEEEEEQ</sequence>